<evidence type="ECO:0000255" key="1">
    <source>
        <dbReference type="HAMAP-Rule" id="MF_00038"/>
    </source>
</evidence>
<comment type="function">
    <text evidence="1">Catalyzes the initial step of the lipid cycle reactions in the biosynthesis of the cell wall peptidoglycan: transfers peptidoglycan precursor phospho-MurNAc-pentapeptide from UDP-MurNAc-pentapeptide onto the lipid carrier undecaprenyl phosphate, yielding undecaprenyl-pyrophosphoryl-MurNAc-pentapeptide, known as lipid I.</text>
</comment>
<comment type="catalytic activity">
    <reaction evidence="1">
        <text>UDP-N-acetyl-alpha-D-muramoyl-L-alanyl-gamma-D-glutamyl-meso-2,6-diaminopimeloyl-D-alanyl-D-alanine + di-trans,octa-cis-undecaprenyl phosphate = di-trans,octa-cis-undecaprenyl diphospho-N-acetyl-alpha-D-muramoyl-L-alanyl-D-glutamyl-meso-2,6-diaminopimeloyl-D-alanyl-D-alanine + UMP</text>
        <dbReference type="Rhea" id="RHEA:28386"/>
        <dbReference type="ChEBI" id="CHEBI:57865"/>
        <dbReference type="ChEBI" id="CHEBI:60392"/>
        <dbReference type="ChEBI" id="CHEBI:61386"/>
        <dbReference type="ChEBI" id="CHEBI:61387"/>
        <dbReference type="EC" id="2.7.8.13"/>
    </reaction>
</comment>
<comment type="cofactor">
    <cofactor evidence="1">
        <name>Mg(2+)</name>
        <dbReference type="ChEBI" id="CHEBI:18420"/>
    </cofactor>
</comment>
<comment type="pathway">
    <text evidence="1">Cell wall biogenesis; peptidoglycan biosynthesis.</text>
</comment>
<comment type="subcellular location">
    <subcellularLocation>
        <location evidence="1">Cell inner membrane</location>
        <topology evidence="1">Multi-pass membrane protein</topology>
    </subcellularLocation>
</comment>
<comment type="similarity">
    <text evidence="1">Belongs to the glycosyltransferase 4 family. MraY subfamily.</text>
</comment>
<reference key="1">
    <citation type="journal article" date="2002" name="Proc. Natl. Acad. Sci. U.S.A.">
        <title>The Brucella suis genome reveals fundamental similarities between animal and plant pathogens and symbionts.</title>
        <authorList>
            <person name="Paulsen I.T."/>
            <person name="Seshadri R."/>
            <person name="Nelson K.E."/>
            <person name="Eisen J.A."/>
            <person name="Heidelberg J.F."/>
            <person name="Read T.D."/>
            <person name="Dodson R.J."/>
            <person name="Umayam L.A."/>
            <person name="Brinkac L.M."/>
            <person name="Beanan M.J."/>
            <person name="Daugherty S.C."/>
            <person name="DeBoy R.T."/>
            <person name="Durkin A.S."/>
            <person name="Kolonay J.F."/>
            <person name="Madupu R."/>
            <person name="Nelson W.C."/>
            <person name="Ayodeji B."/>
            <person name="Kraul M."/>
            <person name="Shetty J."/>
            <person name="Malek J.A."/>
            <person name="Van Aken S.E."/>
            <person name="Riedmuller S."/>
            <person name="Tettelin H."/>
            <person name="Gill S.R."/>
            <person name="White O."/>
            <person name="Salzberg S.L."/>
            <person name="Hoover D.L."/>
            <person name="Lindler L.E."/>
            <person name="Halling S.M."/>
            <person name="Boyle S.M."/>
            <person name="Fraser C.M."/>
        </authorList>
    </citation>
    <scope>NUCLEOTIDE SEQUENCE [LARGE SCALE GENOMIC DNA]</scope>
    <source>
        <strain>1330</strain>
    </source>
</reference>
<reference key="2">
    <citation type="journal article" date="2011" name="J. Bacteriol.">
        <title>Revised genome sequence of Brucella suis 1330.</title>
        <authorList>
            <person name="Tae H."/>
            <person name="Shallom S."/>
            <person name="Settlage R."/>
            <person name="Preston D."/>
            <person name="Adams L.G."/>
            <person name="Garner H.R."/>
        </authorList>
    </citation>
    <scope>NUCLEOTIDE SEQUENCE [LARGE SCALE GENOMIC DNA]</scope>
    <source>
        <strain>1330</strain>
    </source>
</reference>
<keyword id="KW-0131">Cell cycle</keyword>
<keyword id="KW-0132">Cell division</keyword>
<keyword id="KW-0997">Cell inner membrane</keyword>
<keyword id="KW-1003">Cell membrane</keyword>
<keyword id="KW-0133">Cell shape</keyword>
<keyword id="KW-0961">Cell wall biogenesis/degradation</keyword>
<keyword id="KW-0460">Magnesium</keyword>
<keyword id="KW-0472">Membrane</keyword>
<keyword id="KW-0479">Metal-binding</keyword>
<keyword id="KW-0573">Peptidoglycan synthesis</keyword>
<keyword id="KW-0808">Transferase</keyword>
<keyword id="KW-0812">Transmembrane</keyword>
<keyword id="KW-1133">Transmembrane helix</keyword>
<sequence length="360" mass="38745">MLMFLTHFAEHVTPFNVFRYITFRTGGAMITSALIVFLFGPTIINSLRVRQGKGQPIRADGPQTHFKKAGTPTMGGLMIMTGILASCLLWANLASVYVWVVLMVSVGFGAIGFYDDYLKVTKQSDKGFSGKARLGIEFLIAAIAAFTIMRAGQEPFSSSLTFPFVKQLVINLSWFFIPFAAFVMVGAGNAVNLTDGLDGLAIVPVMVAAASFGFIAYLSGNAIFADYLQIHFVPGTGELAVVLGAVIGAGLGFLWFNAPPAAIFMGDTGSLALGGMLGTVAVATKHEIVLAIIGGLFVMEALSVIIQVGFFKMTGRRVFLMAPIHHHFEKKGWTESQVVIRFWIVAIILAMIGLSTLKLR</sequence>
<proteinExistence type="inferred from homology"/>
<dbReference type="EC" id="2.7.8.13" evidence="1"/>
<dbReference type="EMBL" id="AE014291">
    <property type="protein sequence ID" value="AAN30347.1"/>
    <property type="molecule type" value="Genomic_DNA"/>
</dbReference>
<dbReference type="EMBL" id="CP002997">
    <property type="protein sequence ID" value="AEM18763.1"/>
    <property type="molecule type" value="Genomic_DNA"/>
</dbReference>
<dbReference type="RefSeq" id="WP_002964542.1">
    <property type="nucleotide sequence ID" value="NZ_KN046804.1"/>
</dbReference>
<dbReference type="SMR" id="P64256"/>
<dbReference type="GeneID" id="93016268"/>
<dbReference type="KEGG" id="bms:BR1434"/>
<dbReference type="KEGG" id="bsi:BS1330_I1428"/>
<dbReference type="PATRIC" id="fig|204722.21.peg.922"/>
<dbReference type="HOGENOM" id="CLU_023982_0_0_5"/>
<dbReference type="PhylomeDB" id="P64256"/>
<dbReference type="UniPathway" id="UPA00219"/>
<dbReference type="Proteomes" id="UP000007104">
    <property type="component" value="Chromosome I"/>
</dbReference>
<dbReference type="GO" id="GO:0005886">
    <property type="term" value="C:plasma membrane"/>
    <property type="evidence" value="ECO:0007669"/>
    <property type="project" value="UniProtKB-SubCell"/>
</dbReference>
<dbReference type="GO" id="GO:0046872">
    <property type="term" value="F:metal ion binding"/>
    <property type="evidence" value="ECO:0007669"/>
    <property type="project" value="UniProtKB-KW"/>
</dbReference>
<dbReference type="GO" id="GO:0008963">
    <property type="term" value="F:phospho-N-acetylmuramoyl-pentapeptide-transferase activity"/>
    <property type="evidence" value="ECO:0007669"/>
    <property type="project" value="UniProtKB-UniRule"/>
</dbReference>
<dbReference type="GO" id="GO:0051992">
    <property type="term" value="F:UDP-N-acetylmuramoyl-L-alanyl-D-glutamyl-meso-2,6-diaminopimelyl-D-alanyl-D-alanine:undecaprenyl-phosphate transferase activity"/>
    <property type="evidence" value="ECO:0007669"/>
    <property type="project" value="RHEA"/>
</dbReference>
<dbReference type="GO" id="GO:0051301">
    <property type="term" value="P:cell division"/>
    <property type="evidence" value="ECO:0007669"/>
    <property type="project" value="UniProtKB-KW"/>
</dbReference>
<dbReference type="GO" id="GO:0071555">
    <property type="term" value="P:cell wall organization"/>
    <property type="evidence" value="ECO:0007669"/>
    <property type="project" value="UniProtKB-KW"/>
</dbReference>
<dbReference type="GO" id="GO:0009252">
    <property type="term" value="P:peptidoglycan biosynthetic process"/>
    <property type="evidence" value="ECO:0007669"/>
    <property type="project" value="UniProtKB-UniRule"/>
</dbReference>
<dbReference type="GO" id="GO:0008360">
    <property type="term" value="P:regulation of cell shape"/>
    <property type="evidence" value="ECO:0007669"/>
    <property type="project" value="UniProtKB-KW"/>
</dbReference>
<dbReference type="CDD" id="cd06852">
    <property type="entry name" value="GT_MraY"/>
    <property type="match status" value="1"/>
</dbReference>
<dbReference type="HAMAP" id="MF_00038">
    <property type="entry name" value="MraY"/>
    <property type="match status" value="1"/>
</dbReference>
<dbReference type="InterPro" id="IPR000715">
    <property type="entry name" value="Glycosyl_transferase_4"/>
</dbReference>
<dbReference type="InterPro" id="IPR003524">
    <property type="entry name" value="PNAcMuramoyl-5peptid_Trfase"/>
</dbReference>
<dbReference type="InterPro" id="IPR018480">
    <property type="entry name" value="PNAcMuramoyl-5peptid_Trfase_CS"/>
</dbReference>
<dbReference type="NCBIfam" id="TIGR00445">
    <property type="entry name" value="mraY"/>
    <property type="match status" value="1"/>
</dbReference>
<dbReference type="PANTHER" id="PTHR22926">
    <property type="entry name" value="PHOSPHO-N-ACETYLMURAMOYL-PENTAPEPTIDE-TRANSFERASE"/>
    <property type="match status" value="1"/>
</dbReference>
<dbReference type="PANTHER" id="PTHR22926:SF5">
    <property type="entry name" value="PHOSPHO-N-ACETYLMURAMOYL-PENTAPEPTIDE-TRANSFERASE HOMOLOG"/>
    <property type="match status" value="1"/>
</dbReference>
<dbReference type="Pfam" id="PF00953">
    <property type="entry name" value="Glycos_transf_4"/>
    <property type="match status" value="1"/>
</dbReference>
<dbReference type="Pfam" id="PF10555">
    <property type="entry name" value="MraY_sig1"/>
    <property type="match status" value="1"/>
</dbReference>
<dbReference type="PROSITE" id="PS01347">
    <property type="entry name" value="MRAY_1"/>
    <property type="match status" value="1"/>
</dbReference>
<dbReference type="PROSITE" id="PS01348">
    <property type="entry name" value="MRAY_2"/>
    <property type="match status" value="1"/>
</dbReference>
<name>MRAY_BRUSU</name>
<accession>P64256</accession>
<accession>G0KBJ4</accession>
<accession>Q8YI69</accession>
<feature type="chain" id="PRO_0000108796" description="Phospho-N-acetylmuramoyl-pentapeptide-transferase">
    <location>
        <begin position="1"/>
        <end position="360"/>
    </location>
</feature>
<feature type="transmembrane region" description="Helical" evidence="1">
    <location>
        <begin position="27"/>
        <end position="47"/>
    </location>
</feature>
<feature type="transmembrane region" description="Helical" evidence="1">
    <location>
        <begin position="71"/>
        <end position="91"/>
    </location>
</feature>
<feature type="transmembrane region" description="Helical" evidence="1">
    <location>
        <begin position="93"/>
        <end position="113"/>
    </location>
</feature>
<feature type="transmembrane region" description="Helical" evidence="1">
    <location>
        <begin position="128"/>
        <end position="148"/>
    </location>
</feature>
<feature type="transmembrane region" description="Helical" evidence="1">
    <location>
        <begin position="168"/>
        <end position="188"/>
    </location>
</feature>
<feature type="transmembrane region" description="Helical" evidence="1">
    <location>
        <begin position="199"/>
        <end position="219"/>
    </location>
</feature>
<feature type="transmembrane region" description="Helical" evidence="1">
    <location>
        <begin position="239"/>
        <end position="259"/>
    </location>
</feature>
<feature type="transmembrane region" description="Helical" evidence="1">
    <location>
        <begin position="262"/>
        <end position="282"/>
    </location>
</feature>
<feature type="transmembrane region" description="Helical" evidence="1">
    <location>
        <begin position="288"/>
        <end position="308"/>
    </location>
</feature>
<feature type="transmembrane region" description="Helical" evidence="1">
    <location>
        <begin position="337"/>
        <end position="357"/>
    </location>
</feature>
<organism>
    <name type="scientific">Brucella suis biovar 1 (strain 1330)</name>
    <dbReference type="NCBI Taxonomy" id="204722"/>
    <lineage>
        <taxon>Bacteria</taxon>
        <taxon>Pseudomonadati</taxon>
        <taxon>Pseudomonadota</taxon>
        <taxon>Alphaproteobacteria</taxon>
        <taxon>Hyphomicrobiales</taxon>
        <taxon>Brucellaceae</taxon>
        <taxon>Brucella/Ochrobactrum group</taxon>
        <taxon>Brucella</taxon>
    </lineage>
</organism>
<gene>
    <name evidence="1" type="primary">mraY</name>
    <name type="ordered locus">BR1434</name>
    <name type="ordered locus">BS1330_I1428</name>
</gene>
<protein>
    <recommendedName>
        <fullName evidence="1">Phospho-N-acetylmuramoyl-pentapeptide-transferase</fullName>
        <ecNumber evidence="1">2.7.8.13</ecNumber>
    </recommendedName>
    <alternativeName>
        <fullName evidence="1">UDP-MurNAc-pentapeptide phosphotransferase</fullName>
    </alternativeName>
</protein>